<dbReference type="EC" id="1.3.8.13" evidence="1"/>
<dbReference type="EMBL" id="CP000948">
    <property type="protein sequence ID" value="ACB01244.1"/>
    <property type="molecule type" value="Genomic_DNA"/>
</dbReference>
<dbReference type="RefSeq" id="WP_000347117.1">
    <property type="nucleotide sequence ID" value="NC_010473.1"/>
</dbReference>
<dbReference type="SMR" id="B1XBG4"/>
<dbReference type="GeneID" id="93777396"/>
<dbReference type="KEGG" id="ecd:ECDH10B_0040"/>
<dbReference type="HOGENOM" id="CLU_018204_0_2_6"/>
<dbReference type="UniPathway" id="UPA00117"/>
<dbReference type="GO" id="GO:0005737">
    <property type="term" value="C:cytoplasm"/>
    <property type="evidence" value="ECO:0007669"/>
    <property type="project" value="UniProtKB-SubCell"/>
</dbReference>
<dbReference type="GO" id="GO:0003995">
    <property type="term" value="F:acyl-CoA dehydrogenase activity"/>
    <property type="evidence" value="ECO:0007669"/>
    <property type="project" value="InterPro"/>
</dbReference>
<dbReference type="GO" id="GO:0050660">
    <property type="term" value="F:flavin adenine dinucleotide binding"/>
    <property type="evidence" value="ECO:0007669"/>
    <property type="project" value="InterPro"/>
</dbReference>
<dbReference type="GO" id="GO:0009437">
    <property type="term" value="P:carnitine metabolic process"/>
    <property type="evidence" value="ECO:0007669"/>
    <property type="project" value="UniProtKB-UniRule"/>
</dbReference>
<dbReference type="CDD" id="cd00567">
    <property type="entry name" value="ACAD"/>
    <property type="match status" value="1"/>
</dbReference>
<dbReference type="FunFam" id="1.20.140.10:FF:000001">
    <property type="entry name" value="Acyl-CoA dehydrogenase"/>
    <property type="match status" value="1"/>
</dbReference>
<dbReference type="FunFam" id="2.40.110.10:FF:000002">
    <property type="entry name" value="Acyl-CoA dehydrogenase fadE12"/>
    <property type="match status" value="1"/>
</dbReference>
<dbReference type="FunFam" id="1.10.540.10:FF:000005">
    <property type="entry name" value="Crotonobetainyl-CoA reductase"/>
    <property type="match status" value="1"/>
</dbReference>
<dbReference type="Gene3D" id="1.10.540.10">
    <property type="entry name" value="Acyl-CoA dehydrogenase/oxidase, N-terminal domain"/>
    <property type="match status" value="1"/>
</dbReference>
<dbReference type="Gene3D" id="2.40.110.10">
    <property type="entry name" value="Butyryl-CoA Dehydrogenase, subunit A, domain 2"/>
    <property type="match status" value="1"/>
</dbReference>
<dbReference type="Gene3D" id="1.20.140.10">
    <property type="entry name" value="Butyryl-CoA Dehydrogenase, subunit A, domain 3"/>
    <property type="match status" value="1"/>
</dbReference>
<dbReference type="HAMAP" id="MF_01052">
    <property type="entry name" value="CaiA"/>
    <property type="match status" value="1"/>
</dbReference>
<dbReference type="InterPro" id="IPR006089">
    <property type="entry name" value="Acyl-CoA_DH_CS"/>
</dbReference>
<dbReference type="InterPro" id="IPR006091">
    <property type="entry name" value="Acyl-CoA_Oxase/DH_mid-dom"/>
</dbReference>
<dbReference type="InterPro" id="IPR046373">
    <property type="entry name" value="Acyl-CoA_Oxase/DH_mid-dom_sf"/>
</dbReference>
<dbReference type="InterPro" id="IPR036250">
    <property type="entry name" value="AcylCo_DH-like_C"/>
</dbReference>
<dbReference type="InterPro" id="IPR009075">
    <property type="entry name" value="AcylCo_DH/oxidase_C"/>
</dbReference>
<dbReference type="InterPro" id="IPR013786">
    <property type="entry name" value="AcylCoA_DH/ox_N"/>
</dbReference>
<dbReference type="InterPro" id="IPR037069">
    <property type="entry name" value="AcylCoA_DH/ox_N_sf"/>
</dbReference>
<dbReference type="InterPro" id="IPR009100">
    <property type="entry name" value="AcylCoA_DH/oxidase_NM_dom_sf"/>
</dbReference>
<dbReference type="InterPro" id="IPR023450">
    <property type="entry name" value="CaiA"/>
</dbReference>
<dbReference type="NCBIfam" id="NF002885">
    <property type="entry name" value="PRK03354.1"/>
    <property type="match status" value="1"/>
</dbReference>
<dbReference type="PANTHER" id="PTHR43884">
    <property type="entry name" value="ACYL-COA DEHYDROGENASE"/>
    <property type="match status" value="1"/>
</dbReference>
<dbReference type="PANTHER" id="PTHR43884:SF12">
    <property type="entry name" value="ISOVALERYL-COA DEHYDROGENASE, MITOCHONDRIAL-RELATED"/>
    <property type="match status" value="1"/>
</dbReference>
<dbReference type="Pfam" id="PF00441">
    <property type="entry name" value="Acyl-CoA_dh_1"/>
    <property type="match status" value="1"/>
</dbReference>
<dbReference type="Pfam" id="PF02770">
    <property type="entry name" value="Acyl-CoA_dh_M"/>
    <property type="match status" value="1"/>
</dbReference>
<dbReference type="Pfam" id="PF02771">
    <property type="entry name" value="Acyl-CoA_dh_N"/>
    <property type="match status" value="1"/>
</dbReference>
<dbReference type="PIRSF" id="PIRSF016578">
    <property type="entry name" value="HsaA"/>
    <property type="match status" value="1"/>
</dbReference>
<dbReference type="SUPFAM" id="SSF47203">
    <property type="entry name" value="Acyl-CoA dehydrogenase C-terminal domain-like"/>
    <property type="match status" value="1"/>
</dbReference>
<dbReference type="SUPFAM" id="SSF56645">
    <property type="entry name" value="Acyl-CoA dehydrogenase NM domain-like"/>
    <property type="match status" value="1"/>
</dbReference>
<dbReference type="PROSITE" id="PS00072">
    <property type="entry name" value="ACYL_COA_DH_1"/>
    <property type="match status" value="1"/>
</dbReference>
<dbReference type="PROSITE" id="PS00073">
    <property type="entry name" value="ACYL_COA_DH_2"/>
    <property type="match status" value="1"/>
</dbReference>
<protein>
    <recommendedName>
        <fullName evidence="1">Crotonobetainyl-CoA reductase</fullName>
        <ecNumber evidence="1">1.3.8.13</ecNumber>
    </recommendedName>
    <alternativeName>
        <fullName evidence="1">Crotonobetainyl-CoA dehydrogenase</fullName>
    </alternativeName>
</protein>
<organism>
    <name type="scientific">Escherichia coli (strain K12 / DH10B)</name>
    <dbReference type="NCBI Taxonomy" id="316385"/>
    <lineage>
        <taxon>Bacteria</taxon>
        <taxon>Pseudomonadati</taxon>
        <taxon>Pseudomonadota</taxon>
        <taxon>Gammaproteobacteria</taxon>
        <taxon>Enterobacterales</taxon>
        <taxon>Enterobacteriaceae</taxon>
        <taxon>Escherichia</taxon>
    </lineage>
</organism>
<proteinExistence type="inferred from homology"/>
<evidence type="ECO:0000255" key="1">
    <source>
        <dbReference type="HAMAP-Rule" id="MF_01052"/>
    </source>
</evidence>
<gene>
    <name evidence="1" type="primary">caiA</name>
    <name type="ordered locus">ECDH10B_0040</name>
</gene>
<accession>B1XBG4</accession>
<comment type="function">
    <text evidence="1">Catalyzes the reduction of crotonobetainyl-CoA to gamma-butyrobetainyl-CoA.</text>
</comment>
<comment type="catalytic activity">
    <reaction evidence="1">
        <text>4-(trimethylamino)butanoyl-CoA + oxidized [electron-transfer flavoprotein] + H(+) = crotonobetainyl-CoA + reduced [electron-transfer flavoprotein]</text>
        <dbReference type="Rhea" id="RHEA:51584"/>
        <dbReference type="Rhea" id="RHEA-COMP:10685"/>
        <dbReference type="Rhea" id="RHEA-COMP:10686"/>
        <dbReference type="ChEBI" id="CHEBI:15378"/>
        <dbReference type="ChEBI" id="CHEBI:57692"/>
        <dbReference type="ChEBI" id="CHEBI:58307"/>
        <dbReference type="ChEBI" id="CHEBI:60933"/>
        <dbReference type="ChEBI" id="CHEBI:61513"/>
        <dbReference type="EC" id="1.3.8.13"/>
    </reaction>
</comment>
<comment type="cofactor">
    <cofactor evidence="1">
        <name>FAD</name>
        <dbReference type="ChEBI" id="CHEBI:57692"/>
    </cofactor>
</comment>
<comment type="pathway">
    <text evidence="1">Amine and polyamine metabolism; carnitine metabolism.</text>
</comment>
<comment type="subunit">
    <text evidence="1">Homotetramer.</text>
</comment>
<comment type="subcellular location">
    <subcellularLocation>
        <location evidence="1">Cytoplasm</location>
    </subcellularLocation>
</comment>
<comment type="similarity">
    <text evidence="1">Belongs to the acyl-CoA dehydrogenase family.</text>
</comment>
<sequence length="380" mass="42558">MDFNLNDEQELFVAGIRELMASENWEAYFAECDRDSVYPERFVKALADMGIDSLLIPEEHGGLDAGFVTLAAVWMELGRLGAPTYVLYQLPGGFNTFLREGTQEQIDKIMAFRGTGKQMWNSAITEPGAGSDVGSLKTTYTRRNGKIYLNGSKCFITSSAYTPYIVVMARDGASPDKPVYTEWFVDMSKPGIKVTKLEKLGLRMDSCCEITFDDVELDEKDMFGREGNGFNRVKEEFDHERFLVALTNYGTAMCAFEDAARYANQRVQFGEAIGRFQLIQEKFAHMAIKLNSMKNMLYEAAWKADNGTITSGDAAMCKYFCANAAFEVVDSAMQVLGGVGIAGNHRISRFWRDLRVDRVSGGSDEMQILTLGRAVLKQYR</sequence>
<keyword id="KW-0963">Cytoplasm</keyword>
<keyword id="KW-0274">FAD</keyword>
<keyword id="KW-0285">Flavoprotein</keyword>
<keyword id="KW-0560">Oxidoreductase</keyword>
<reference key="1">
    <citation type="journal article" date="2008" name="J. Bacteriol.">
        <title>The complete genome sequence of Escherichia coli DH10B: insights into the biology of a laboratory workhorse.</title>
        <authorList>
            <person name="Durfee T."/>
            <person name="Nelson R."/>
            <person name="Baldwin S."/>
            <person name="Plunkett G. III"/>
            <person name="Burland V."/>
            <person name="Mau B."/>
            <person name="Petrosino J.F."/>
            <person name="Qin X."/>
            <person name="Muzny D.M."/>
            <person name="Ayele M."/>
            <person name="Gibbs R.A."/>
            <person name="Csorgo B."/>
            <person name="Posfai G."/>
            <person name="Weinstock G.M."/>
            <person name="Blattner F.R."/>
        </authorList>
    </citation>
    <scope>NUCLEOTIDE SEQUENCE [LARGE SCALE GENOMIC DNA]</scope>
    <source>
        <strain>K12 / DH10B</strain>
    </source>
</reference>
<feature type="chain" id="PRO_1000136272" description="Crotonobetainyl-CoA reductase">
    <location>
        <begin position="1"/>
        <end position="380"/>
    </location>
</feature>
<name>CAIA_ECODH</name>